<protein>
    <recommendedName>
        <fullName>Prostacyclin synthase</fullName>
        <ecNumber evidence="6 9 10">5.3.99.4</ecNumber>
    </recommendedName>
    <alternativeName>
        <fullName evidence="12">Hydroperoxy icosatetraenoate dehydratase</fullName>
        <ecNumber evidence="8">4.2.1.152</ecNumber>
    </alternativeName>
    <alternativeName>
        <fullName>Prostaglandin I2 synthase</fullName>
    </alternativeName>
</protein>
<evidence type="ECO:0000250" key="1">
    <source>
        <dbReference type="UniProtKB" id="F1RE08"/>
    </source>
</evidence>
<evidence type="ECO:0000250" key="2">
    <source>
        <dbReference type="UniProtKB" id="Q29626"/>
    </source>
</evidence>
<evidence type="ECO:0000255" key="3"/>
<evidence type="ECO:0000269" key="4">
    <source>
    </source>
</evidence>
<evidence type="ECO:0000269" key="5">
    <source>
    </source>
</evidence>
<evidence type="ECO:0000269" key="6">
    <source>
    </source>
</evidence>
<evidence type="ECO:0000269" key="7">
    <source>
    </source>
</evidence>
<evidence type="ECO:0000269" key="8">
    <source>
    </source>
</evidence>
<evidence type="ECO:0000269" key="9">
    <source>
    </source>
</evidence>
<evidence type="ECO:0000269" key="10">
    <source>
    </source>
</evidence>
<evidence type="ECO:0000269" key="11">
    <source>
    </source>
</evidence>
<evidence type="ECO:0000305" key="12"/>
<evidence type="ECO:0000305" key="13">
    <source>
    </source>
</evidence>
<evidence type="ECO:0000305" key="14">
    <source>
    </source>
</evidence>
<evidence type="ECO:0000305" key="15">
    <source>
    </source>
</evidence>
<evidence type="ECO:0000305" key="16">
    <source>
    </source>
</evidence>
<evidence type="ECO:0007744" key="17">
    <source>
        <dbReference type="PDB" id="2IAG"/>
    </source>
</evidence>
<evidence type="ECO:0007744" key="18">
    <source>
        <dbReference type="PDB" id="3B6H"/>
    </source>
</evidence>
<evidence type="ECO:0007829" key="19">
    <source>
        <dbReference type="PDB" id="2IAG"/>
    </source>
</evidence>
<evidence type="ECO:0007829" key="20">
    <source>
        <dbReference type="PDB" id="3B6H"/>
    </source>
</evidence>
<sequence>MAWAALLGLLAALLLLLLLSRRRTRRPGEPPLDLGSIPWLGYALDFGKDAASFLTRMKEKHGDIFTILVGGRYVTVLLDPHSYDAVVWEPRTRLDFHAYAIFLMERIFDVQLPHYSPSDEKARMKLTLLHRELQALTEAMYTNLHAVLLGDATEAGSGWHEMGLLDFSYSFLLRAGYLTLYGIEALPRTHESQAQDRVHSADVFHTFRQLDRLLPKLARGSLSVGDKDHMCSVKSRLWKLLSPARLARRAHRSKWLESYLLHLEEMGVSEEMQARALVLQLWATQGNMGPAAFWLLLFLLKNPEALAAVRGELESILWQAEQPVSQTTTLPQKVLDSTPVLDSVLSESLRLTAAPFITREVVVDLAMPMADGREFNLRRGDRLLLFPFLSPQRDPEIYTDPEVFKYNRFLNPDGSEKKDFYKDGKRLKNYNMPWGAGHNHCLGRSYAVNSIKQFVFLVLVHLDLELINADVEIPEFDLSRYGFGLMQPEHDVPVRYRIRP</sequence>
<proteinExistence type="evidence at protein level"/>
<keyword id="KW-0002">3D-structure</keyword>
<keyword id="KW-0256">Endoplasmic reticulum</keyword>
<keyword id="KW-0275">Fatty acid biosynthesis</keyword>
<keyword id="KW-0276">Fatty acid metabolism</keyword>
<keyword id="KW-0349">Heme</keyword>
<keyword id="KW-0408">Iron</keyword>
<keyword id="KW-0413">Isomerase</keyword>
<keyword id="KW-0444">Lipid biosynthesis</keyword>
<keyword id="KW-0443">Lipid metabolism</keyword>
<keyword id="KW-0456">Lyase</keyword>
<keyword id="KW-0472">Membrane</keyword>
<keyword id="KW-0479">Metal-binding</keyword>
<keyword id="KW-0643">Prostaglandin biosynthesis</keyword>
<keyword id="KW-0644">Prostaglandin metabolism</keyword>
<keyword id="KW-1267">Proteomics identification</keyword>
<keyword id="KW-1185">Reference proteome</keyword>
<keyword id="KW-0812">Transmembrane</keyword>
<keyword id="KW-1133">Transmembrane helix</keyword>
<organism>
    <name type="scientific">Homo sapiens</name>
    <name type="common">Human</name>
    <dbReference type="NCBI Taxonomy" id="9606"/>
    <lineage>
        <taxon>Eukaryota</taxon>
        <taxon>Metazoa</taxon>
        <taxon>Chordata</taxon>
        <taxon>Craniata</taxon>
        <taxon>Vertebrata</taxon>
        <taxon>Euteleostomi</taxon>
        <taxon>Mammalia</taxon>
        <taxon>Eutheria</taxon>
        <taxon>Euarchontoglires</taxon>
        <taxon>Primates</taxon>
        <taxon>Haplorrhini</taxon>
        <taxon>Catarrhini</taxon>
        <taxon>Hominidae</taxon>
        <taxon>Homo</taxon>
    </lineage>
</organism>
<reference key="1">
    <citation type="journal article" date="1994" name="Biochem. Biophys. Res. Commun.">
        <title>Molecular cloning and expression of human prostacyclin synthase.</title>
        <authorList>
            <person name="Miyata A."/>
            <person name="Hara S."/>
            <person name="Yokoyama C."/>
            <person name="Inoue H."/>
            <person name="Ullrich V."/>
            <person name="Tanabe T."/>
        </authorList>
    </citation>
    <scope>NUCLEOTIDE SEQUENCE [MRNA]</scope>
    <scope>TISSUE SPECIFICITY</scope>
    <source>
        <tissue>Aorta</tissue>
    </source>
</reference>
<reference key="2">
    <citation type="journal article" date="2001" name="Hum. Genet.">
        <title>Characterization of new mutations in the coding sequence and 5'-untranslated region of the human prostacyclin synthase gene (CYP8A1).</title>
        <authorList>
            <person name="Chevalier D."/>
            <person name="Cauffiez C."/>
            <person name="Bernard C."/>
            <person name="Lo-Guidice J.-M."/>
            <person name="Allorge D."/>
            <person name="Fazio F."/>
            <person name="Ferrari N."/>
            <person name="Libersa C."/>
            <person name="Lhermitte M."/>
            <person name="D'Halluin J.C."/>
            <person name="Broly F."/>
        </authorList>
    </citation>
    <scope>NUCLEOTIDE SEQUENCE [MRNA]</scope>
    <scope>VARIANTS LEU-38; ARG-118 AND SER-379</scope>
</reference>
<reference key="3">
    <citation type="journal article" date="2001" name="Nature">
        <title>The DNA sequence and comparative analysis of human chromosome 20.</title>
        <authorList>
            <person name="Deloukas P."/>
            <person name="Matthews L.H."/>
            <person name="Ashurst J.L."/>
            <person name="Burton J."/>
            <person name="Gilbert J.G.R."/>
            <person name="Jones M."/>
            <person name="Stavrides G."/>
            <person name="Almeida J.P."/>
            <person name="Babbage A.K."/>
            <person name="Bagguley C.L."/>
            <person name="Bailey J."/>
            <person name="Barlow K.F."/>
            <person name="Bates K.N."/>
            <person name="Beard L.M."/>
            <person name="Beare D.M."/>
            <person name="Beasley O.P."/>
            <person name="Bird C.P."/>
            <person name="Blakey S.E."/>
            <person name="Bridgeman A.M."/>
            <person name="Brown A.J."/>
            <person name="Buck D."/>
            <person name="Burrill W.D."/>
            <person name="Butler A.P."/>
            <person name="Carder C."/>
            <person name="Carter N.P."/>
            <person name="Chapman J.C."/>
            <person name="Clamp M."/>
            <person name="Clark G."/>
            <person name="Clark L.N."/>
            <person name="Clark S.Y."/>
            <person name="Clee C.M."/>
            <person name="Clegg S."/>
            <person name="Cobley V.E."/>
            <person name="Collier R.E."/>
            <person name="Connor R.E."/>
            <person name="Corby N.R."/>
            <person name="Coulson A."/>
            <person name="Coville G.J."/>
            <person name="Deadman R."/>
            <person name="Dhami P.D."/>
            <person name="Dunn M."/>
            <person name="Ellington A.G."/>
            <person name="Frankland J.A."/>
            <person name="Fraser A."/>
            <person name="French L."/>
            <person name="Garner P."/>
            <person name="Grafham D.V."/>
            <person name="Griffiths C."/>
            <person name="Griffiths M.N.D."/>
            <person name="Gwilliam R."/>
            <person name="Hall R.E."/>
            <person name="Hammond S."/>
            <person name="Harley J.L."/>
            <person name="Heath P.D."/>
            <person name="Ho S."/>
            <person name="Holden J.L."/>
            <person name="Howden P.J."/>
            <person name="Huckle E."/>
            <person name="Hunt A.R."/>
            <person name="Hunt S.E."/>
            <person name="Jekosch K."/>
            <person name="Johnson C.M."/>
            <person name="Johnson D."/>
            <person name="Kay M.P."/>
            <person name="Kimberley A.M."/>
            <person name="King A."/>
            <person name="Knights A."/>
            <person name="Laird G.K."/>
            <person name="Lawlor S."/>
            <person name="Lehvaeslaiho M.H."/>
            <person name="Leversha M.A."/>
            <person name="Lloyd C."/>
            <person name="Lloyd D.M."/>
            <person name="Lovell J.D."/>
            <person name="Marsh V.L."/>
            <person name="Martin S.L."/>
            <person name="McConnachie L.J."/>
            <person name="McLay K."/>
            <person name="McMurray A.A."/>
            <person name="Milne S.A."/>
            <person name="Mistry D."/>
            <person name="Moore M.J.F."/>
            <person name="Mullikin J.C."/>
            <person name="Nickerson T."/>
            <person name="Oliver K."/>
            <person name="Parker A."/>
            <person name="Patel R."/>
            <person name="Pearce T.A.V."/>
            <person name="Peck A.I."/>
            <person name="Phillimore B.J.C.T."/>
            <person name="Prathalingam S.R."/>
            <person name="Plumb R.W."/>
            <person name="Ramsay H."/>
            <person name="Rice C.M."/>
            <person name="Ross M.T."/>
            <person name="Scott C.E."/>
            <person name="Sehra H.K."/>
            <person name="Shownkeen R."/>
            <person name="Sims S."/>
            <person name="Skuce C.D."/>
            <person name="Smith M.L."/>
            <person name="Soderlund C."/>
            <person name="Steward C.A."/>
            <person name="Sulston J.E."/>
            <person name="Swann R.M."/>
            <person name="Sycamore N."/>
            <person name="Taylor R."/>
            <person name="Tee L."/>
            <person name="Thomas D.W."/>
            <person name="Thorpe A."/>
            <person name="Tracey A."/>
            <person name="Tromans A.C."/>
            <person name="Vaudin M."/>
            <person name="Wall M."/>
            <person name="Wallis J.M."/>
            <person name="Whitehead S.L."/>
            <person name="Whittaker P."/>
            <person name="Willey D.L."/>
            <person name="Williams L."/>
            <person name="Williams S.A."/>
            <person name="Wilming L."/>
            <person name="Wray P.W."/>
            <person name="Hubbard T."/>
            <person name="Durbin R.M."/>
            <person name="Bentley D.R."/>
            <person name="Beck S."/>
            <person name="Rogers J."/>
        </authorList>
    </citation>
    <scope>NUCLEOTIDE SEQUENCE [LARGE SCALE GENOMIC DNA]</scope>
</reference>
<reference key="4">
    <citation type="journal article" date="2004" name="Genome Res.">
        <title>The status, quality, and expansion of the NIH full-length cDNA project: the Mammalian Gene Collection (MGC).</title>
        <authorList>
            <consortium name="The MGC Project Team"/>
        </authorList>
    </citation>
    <scope>NUCLEOTIDE SEQUENCE [LARGE SCALE MRNA]</scope>
    <source>
        <tissue>Brain</tissue>
    </source>
</reference>
<reference key="5">
    <citation type="journal article" date="2002" name="Biochem. Biophys. Res. Commun.">
        <title>Splicing mutation of the prostacyclin synthase gene in a family associated with hypertension.</title>
        <authorList>
            <person name="Nakayama T."/>
            <person name="Soma M."/>
            <person name="Watanabe Y."/>
            <person name="Hasimu B."/>
            <person name="Sato M."/>
            <person name="Aoi N."/>
            <person name="Kosuge K."/>
            <person name="Kanmatsuse K."/>
            <person name="Kokubun S."/>
            <person name="Marrow J.D."/>
            <person name="Oates J.A."/>
        </authorList>
    </citation>
    <scope>INVOLVEMENT IN EHT</scope>
</reference>
<reference key="6">
    <citation type="journal article" date="2004" name="J. Biochem.">
        <title>Purification and characterization of recombinant human prostacyclin synthase.</title>
        <authorList>
            <person name="Wada M."/>
            <person name="Yokoyama C."/>
            <person name="Hatae T."/>
            <person name="Shimonishi M."/>
            <person name="Nakamura M."/>
            <person name="Imai Y."/>
            <person name="Ullrich V."/>
            <person name="Tanabe T."/>
        </authorList>
    </citation>
    <scope>CATALYTIC ACTIVITY</scope>
    <scope>FUNCTION</scope>
    <scope>BIOPHYSICOCHEMICAL PROPERTIES</scope>
    <scope>MUTAGENESIS OF CYS-441</scope>
</reference>
<reference key="7">
    <citation type="journal article" date="2007" name="Arch. Biochem. Biophys.">
        <title>Reaction mechanisms of 15-hydroperoxyeicosatetraenoic acid catalyzed by human prostacyclin and thromboxane synthases.</title>
        <authorList>
            <person name="Yeh H.C."/>
            <person name="Tsai A.L."/>
            <person name="Wang L.H."/>
        </authorList>
    </citation>
    <scope>CATALYTIC ACTIVITY</scope>
    <scope>FUNCTION</scope>
    <scope>BIOPHYSICOCHEMICAL PROPERTIES</scope>
</reference>
<reference key="8">
    <citation type="journal article" date="2015" name="Arch. Biochem. Biophys.">
        <title>Analysis of genetic polymorphism and biochemical characterization of a functionally decreased variant in prostacyclin synthase gene (CYP8A1) in humans.</title>
        <authorList>
            <person name="Cho S.A."/>
            <person name="Rohn-Glowacki K.J."/>
            <person name="Jarrar Y.B."/>
            <person name="Yi M."/>
            <person name="Kim W.Y."/>
            <person name="Shin J.G."/>
            <person name="Lee S.J."/>
        </authorList>
    </citation>
    <scope>FUNCTION</scope>
    <scope>CATALYTIC ACTIVITY</scope>
    <scope>BIOPHYSICOCHEMICAL PROPERTIES</scope>
    <scope>VARIANT THR-447</scope>
    <scope>CHARACTERIZATION OF VARIANT THR-447</scope>
</reference>
<reference key="9">
    <citation type="journal article" date="2006" name="J. Mol. Biol.">
        <title>Crystal structure of the human prostacyclin synthase.</title>
        <authorList>
            <person name="Chiang C.W."/>
            <person name="Yeh H.C."/>
            <person name="Wang L.H."/>
            <person name="Chan N.L."/>
        </authorList>
    </citation>
    <scope>X-RAY CRYSTALLOGRAPHY (2.15 ANGSTROMS) OF 23-500 IN COMPLEX WITH HEME</scope>
    <scope>COFACTOR</scope>
</reference>
<reference key="10">
    <citation type="journal article" date="2008" name="J. Biol. Chem.">
        <title>Structures of prostacyclin synthase and its complexes with substrate analog and inhibitor reveal a ligand-specific heme conformation change.</title>
        <authorList>
            <person name="Li Y.C."/>
            <person name="Chiang C.W."/>
            <person name="Yeh H.C."/>
            <person name="Hsu P.Y."/>
            <person name="Whitby F.G."/>
            <person name="Wang L.H."/>
            <person name="Chan N.L."/>
        </authorList>
    </citation>
    <scope>X-RAY CRYSTALLOGRAPHY (1.62 ANGSTROMS) OF 18-500 IN COMPLEX WITH HEME AND INHIBITOR MINOXIDIL</scope>
    <scope>FUNCTION</scope>
    <scope>CATALYTIC ACTIVITY</scope>
    <scope>COFACTOR</scope>
    <scope>BIOPHYSICOCHEMICAL PROPERTIES</scope>
</reference>
<accession>Q16647</accession>
<accession>Q3MII8</accession>
<accession>Q9HAX2</accession>
<accession>Q9HAX3</accession>
<accession>Q9HAX4</accession>
<name>PTGIS_HUMAN</name>
<gene>
    <name type="primary">PTGIS</name>
    <name type="synonym">CYP8</name>
    <name type="synonym">CYP8A1</name>
</gene>
<comment type="function">
    <text evidence="5 6 8 9 10">Catalyzes the biosynthesis and metabolism of eicosanoids. Catalyzes the isomerization of prostaglandin H2 to prostacyclin (= prostaglandin I2), a potent mediator of vasodilation and inhibitor of platelet aggregation (PubMed:12372404, PubMed:15115769, PubMed:18032380, PubMed:25623425). Additionally, displays dehydratase activity, toward hydroperoxyeicosatetraenoates (HPETEs), especially toward (15S)-hydroperoxy-(5Z,8Z,11Z,13E)-eicosatetraenoate (15(S)-HPETE) (PubMed:17459323).</text>
</comment>
<comment type="catalytic activity">
    <reaction evidence="6 9 10">
        <text>prostaglandin H2 = prostaglandin I2</text>
        <dbReference type="Rhea" id="RHEA:23580"/>
        <dbReference type="ChEBI" id="CHEBI:57403"/>
        <dbReference type="ChEBI" id="CHEBI:57405"/>
        <dbReference type="EC" id="5.3.99.4"/>
    </reaction>
    <physiologicalReaction direction="left-to-right" evidence="13 15 16">
        <dbReference type="Rhea" id="RHEA:23581"/>
    </physiologicalReaction>
</comment>
<comment type="catalytic activity">
    <reaction evidence="8">
        <text>a hydroperoxyeicosatetraenoate = an oxoeicosatetraenoate + H2O</text>
        <dbReference type="Rhea" id="RHEA:55556"/>
        <dbReference type="ChEBI" id="CHEBI:15377"/>
        <dbReference type="ChEBI" id="CHEBI:59720"/>
        <dbReference type="ChEBI" id="CHEBI:131859"/>
        <dbReference type="EC" id="4.2.1.152"/>
    </reaction>
    <physiologicalReaction direction="left-to-right" evidence="8">
        <dbReference type="Rhea" id="RHEA:55557"/>
    </physiologicalReaction>
</comment>
<comment type="catalytic activity">
    <reaction evidence="8">
        <text>(15S)-hydroperoxy-(5Z,8Z,11Z,13E)-eicosatetraenoate = 15-oxo-(5Z,8Z,11Z,13E)-eicosatetraenoate + H2O</text>
        <dbReference type="Rhea" id="RHEA:48636"/>
        <dbReference type="ChEBI" id="CHEBI:15377"/>
        <dbReference type="ChEBI" id="CHEBI:57410"/>
        <dbReference type="ChEBI" id="CHEBI:57446"/>
    </reaction>
    <physiologicalReaction direction="left-to-right" evidence="14">
        <dbReference type="Rhea" id="RHEA:48637"/>
    </physiologicalReaction>
</comment>
<comment type="catalytic activity">
    <reaction evidence="8">
        <text>(15S)-hydroperoxy-(5Z,8Z,11Z,13E)-eicosatetraenoate + AH2 = (15S)-hydroxy-(5Z,8Z,11Z,13E)-eicosatetraenoate + A + H2O</text>
        <dbReference type="Rhea" id="RHEA:48856"/>
        <dbReference type="ChEBI" id="CHEBI:13193"/>
        <dbReference type="ChEBI" id="CHEBI:15377"/>
        <dbReference type="ChEBI" id="CHEBI:17499"/>
        <dbReference type="ChEBI" id="CHEBI:57409"/>
        <dbReference type="ChEBI" id="CHEBI:57446"/>
    </reaction>
    <physiologicalReaction direction="left-to-right" evidence="14">
        <dbReference type="Rhea" id="RHEA:48857"/>
    </physiologicalReaction>
</comment>
<comment type="cofactor">
    <cofactor evidence="7 9">
        <name>heme</name>
        <dbReference type="ChEBI" id="CHEBI:30413"/>
    </cofactor>
</comment>
<comment type="biophysicochemical properties">
    <kinetics>
        <KM evidence="10">9.55 uM for 6-keto-PGF1alpha</KM>
        <KM evidence="6">30 uM for prostaglandin H2</KM>
        <KM evidence="8">60 uM for (15S)-hydroperoxy-(5Z,8Z,11Z,13E)-eicosatetraenoate</KM>
        <KM evidence="9">13 uM for prostaglandin H2 (at 23 degrees Celsius)</KM>
        <Vmax evidence="10">534.0 mmol/min/pg enzyme with prostaglandin H2 as substrate</Vmax>
        <Vmax evidence="6">15.0 umol/min/mg enzyme with prostaglandin H2 as substrate</Vmax>
        <Vmax evidence="9">980.0 mol/min/mol enzyme with prostaglandin H2 as substrate</Vmax>
    </kinetics>
</comment>
<comment type="subcellular location">
    <subcellularLocation>
        <location evidence="2">Endoplasmic reticulum membrane</location>
        <topology evidence="3">Single-pass membrane protein</topology>
    </subcellularLocation>
</comment>
<comment type="tissue specificity">
    <text evidence="11">Widely expressed; particularly abundant in ovary, heart, skeletal muscle, lung and prostate.</text>
</comment>
<comment type="disease" evidence="5">
    <disease id="DI-02647">
        <name>Essential hypertension</name>
        <acronym>EHT</acronym>
        <description>A condition in which blood pressure is consistently higher than normal with no identifiable cause.</description>
        <dbReference type="MIM" id="145500"/>
    </disease>
    <text>The disease may be caused by variants affecting the gene represented in this entry.</text>
</comment>
<comment type="similarity">
    <text evidence="12">Belongs to the cytochrome P450 family.</text>
</comment>
<comment type="online information" name="PharmVar Pharmacogen Variation Consortium">
    <link uri="https://www.pharmvar.org/gene/PTGIS"/>
    <text>CYP8A1 alleles</text>
</comment>
<comment type="online information" name="Atlas of Genetics and Cytogenetics in Oncology and Haematology">
    <link uri="https://atlasgeneticsoncology.org/gene/44219/PTGIS"/>
</comment>
<feature type="chain" id="PRO_0000051910" description="Prostacyclin synthase">
    <location>
        <begin position="1"/>
        <end position="500"/>
    </location>
</feature>
<feature type="transmembrane region" description="Helical" evidence="3">
    <location>
        <begin position="1"/>
        <end position="20"/>
    </location>
</feature>
<feature type="binding site" evidence="1">
    <location>
        <position position="106"/>
    </location>
    <ligand>
        <name>substrate</name>
    </ligand>
</feature>
<feature type="binding site" evidence="1">
    <location>
        <position position="112"/>
    </location>
    <ligand>
        <name>substrate</name>
    </ligand>
</feature>
<feature type="binding site" evidence="1">
    <location>
        <position position="287"/>
    </location>
    <ligand>
        <name>substrate</name>
    </ligand>
</feature>
<feature type="binding site" evidence="1">
    <location>
        <begin position="358"/>
        <end position="359"/>
    </location>
    <ligand>
        <name>substrate</name>
    </ligand>
</feature>
<feature type="binding site" evidence="1">
    <location>
        <position position="382"/>
    </location>
    <ligand>
        <name>substrate</name>
    </ligand>
</feature>
<feature type="binding site" description="axial binding residue" evidence="7 9 17 18">
    <location>
        <position position="441"/>
    </location>
    <ligand>
        <name>heme</name>
        <dbReference type="ChEBI" id="CHEBI:30413"/>
    </ligand>
    <ligandPart>
        <name>Fe</name>
        <dbReference type="ChEBI" id="CHEBI:18248"/>
    </ligandPart>
</feature>
<feature type="sequence variant" id="VAR_010915" description="In allele CYP8A1*2; dbSNP:rs1173082660." evidence="4">
    <original>P</original>
    <variation>L</variation>
    <location>
        <position position="38"/>
    </location>
</feature>
<feature type="sequence variant" id="VAR_010916" description="In allele CYP8A1*3; dbSNP:rs5622." evidence="4">
    <original>S</original>
    <variation>R</variation>
    <location>
        <position position="118"/>
    </location>
</feature>
<feature type="sequence variant" id="VAR_014634" description="In dbSNP:rs5623.">
    <original>E</original>
    <variation>A</variation>
    <location>
        <position position="154"/>
    </location>
</feature>
<feature type="sequence variant" id="VAR_014635" description="In dbSNP:rs5624.">
    <original>F</original>
    <variation>L</variation>
    <location>
        <position position="171"/>
    </location>
</feature>
<feature type="sequence variant" id="VAR_014636" description="In dbSNP:rs5626.">
    <original>R</original>
    <variation>C</variation>
    <location>
        <position position="236"/>
    </location>
</feature>
<feature type="sequence variant" id="VAR_010917" description="In allele CYP8A1*4; dbSNP:rs56195291." evidence="4">
    <original>R</original>
    <variation>S</variation>
    <location>
        <position position="379"/>
    </location>
</feature>
<feature type="sequence variant" id="VAR_073186" description="In allele CYP8A1*5; results in a significantly decreased enzyme activity; dbSNP:rs146531327." evidence="10">
    <original>A</original>
    <variation>T</variation>
    <location>
        <position position="447"/>
    </location>
</feature>
<feature type="sequence variant" id="VAR_014637" description="In dbSNP:rs5584.">
    <original>P</original>
    <variation>S</variation>
    <location>
        <position position="500"/>
    </location>
</feature>
<feature type="mutagenesis site" description="Abolishes prostaglandin-I synthase activity." evidence="6">
    <original>C</original>
    <variation>H</variation>
    <location>
        <position position="441"/>
    </location>
</feature>
<feature type="turn" evidence="20">
    <location>
        <begin position="38"/>
        <end position="40"/>
    </location>
</feature>
<feature type="helix" evidence="20">
    <location>
        <begin position="43"/>
        <end position="48"/>
    </location>
</feature>
<feature type="helix" evidence="20">
    <location>
        <begin position="50"/>
        <end position="61"/>
    </location>
</feature>
<feature type="strand" evidence="20">
    <location>
        <begin position="63"/>
        <end position="69"/>
    </location>
</feature>
<feature type="strand" evidence="20">
    <location>
        <begin position="72"/>
        <end position="77"/>
    </location>
</feature>
<feature type="helix" evidence="20">
    <location>
        <begin position="80"/>
        <end position="82"/>
    </location>
</feature>
<feature type="helix" evidence="20">
    <location>
        <begin position="83"/>
        <end position="87"/>
    </location>
</feature>
<feature type="turn" evidence="20">
    <location>
        <begin position="91"/>
        <end position="93"/>
    </location>
</feature>
<feature type="strand" evidence="19">
    <location>
        <begin position="94"/>
        <end position="96"/>
    </location>
</feature>
<feature type="helix" evidence="20">
    <location>
        <begin position="98"/>
        <end position="106"/>
    </location>
</feature>
<feature type="helix" evidence="20">
    <location>
        <begin position="117"/>
        <end position="125"/>
    </location>
</feature>
<feature type="helix" evidence="20">
    <location>
        <begin position="130"/>
        <end position="155"/>
    </location>
</feature>
<feature type="strand" evidence="20">
    <location>
        <begin position="160"/>
        <end position="163"/>
    </location>
</feature>
<feature type="helix" evidence="20">
    <location>
        <begin position="164"/>
        <end position="181"/>
    </location>
</feature>
<feature type="helix" evidence="20">
    <location>
        <begin position="190"/>
        <end position="219"/>
    </location>
</feature>
<feature type="helix" evidence="20">
    <location>
        <begin position="224"/>
        <end position="240"/>
    </location>
</feature>
<feature type="helix" evidence="20">
    <location>
        <begin position="243"/>
        <end position="246"/>
    </location>
</feature>
<feature type="helix" evidence="20">
    <location>
        <begin position="254"/>
        <end position="265"/>
    </location>
</feature>
<feature type="helix" evidence="20">
    <location>
        <begin position="270"/>
        <end position="285"/>
    </location>
</feature>
<feature type="helix" evidence="20">
    <location>
        <begin position="288"/>
        <end position="300"/>
    </location>
</feature>
<feature type="helix" evidence="20">
    <location>
        <begin position="303"/>
        <end position="318"/>
    </location>
</feature>
<feature type="helix" evidence="20">
    <location>
        <begin position="333"/>
        <end position="336"/>
    </location>
</feature>
<feature type="helix" evidence="20">
    <location>
        <begin position="339"/>
        <end position="352"/>
    </location>
</feature>
<feature type="strand" evidence="20">
    <location>
        <begin position="357"/>
        <end position="361"/>
    </location>
</feature>
<feature type="strand" evidence="20">
    <location>
        <begin position="365"/>
        <end position="368"/>
    </location>
</feature>
<feature type="strand" evidence="20">
    <location>
        <begin position="374"/>
        <end position="377"/>
    </location>
</feature>
<feature type="strand" evidence="20">
    <location>
        <begin position="382"/>
        <end position="385"/>
    </location>
</feature>
<feature type="helix" evidence="20">
    <location>
        <begin position="388"/>
        <end position="392"/>
    </location>
</feature>
<feature type="turn" evidence="20">
    <location>
        <begin position="395"/>
        <end position="397"/>
    </location>
</feature>
<feature type="strand" evidence="20">
    <location>
        <begin position="398"/>
        <end position="400"/>
    </location>
</feature>
<feature type="turn" evidence="20">
    <location>
        <begin position="406"/>
        <end position="409"/>
    </location>
</feature>
<feature type="strand" evidence="20">
    <location>
        <begin position="414"/>
        <end position="416"/>
    </location>
</feature>
<feature type="helix" evidence="20">
    <location>
        <begin position="444"/>
        <end position="460"/>
    </location>
</feature>
<feature type="strand" evidence="20">
    <location>
        <begin position="462"/>
        <end position="468"/>
    </location>
</feature>
<feature type="helix" evidence="20">
    <location>
        <begin position="478"/>
        <end position="480"/>
    </location>
</feature>
<feature type="strand" evidence="20">
    <location>
        <begin position="482"/>
        <end position="485"/>
    </location>
</feature>
<feature type="strand" evidence="20">
    <location>
        <begin position="488"/>
        <end position="490"/>
    </location>
</feature>
<feature type="strand" evidence="20">
    <location>
        <begin position="493"/>
        <end position="498"/>
    </location>
</feature>
<dbReference type="EC" id="5.3.99.4" evidence="6 9 10"/>
<dbReference type="EC" id="4.2.1.152" evidence="8"/>
<dbReference type="EMBL" id="D38145">
    <property type="protein sequence ID" value="BAA07343.1"/>
    <property type="molecule type" value="mRNA"/>
</dbReference>
<dbReference type="EMBL" id="AF297048">
    <property type="protein sequence ID" value="AAG31781.1"/>
    <property type="molecule type" value="mRNA"/>
</dbReference>
<dbReference type="EMBL" id="AF297049">
    <property type="protein sequence ID" value="AAG31782.1"/>
    <property type="molecule type" value="mRNA"/>
</dbReference>
<dbReference type="EMBL" id="AF297050">
    <property type="protein sequence ID" value="AAG31783.1"/>
    <property type="molecule type" value="mRNA"/>
</dbReference>
<dbReference type="EMBL" id="AF297051">
    <property type="protein sequence ID" value="AAG31784.1"/>
    <property type="molecule type" value="mRNA"/>
</dbReference>
<dbReference type="EMBL" id="AF297052">
    <property type="protein sequence ID" value="AAG31785.1"/>
    <property type="molecule type" value="mRNA"/>
</dbReference>
<dbReference type="EMBL" id="AL118525">
    <property type="status" value="NOT_ANNOTATED_CDS"/>
    <property type="molecule type" value="Genomic_DNA"/>
</dbReference>
<dbReference type="EMBL" id="BC101809">
    <property type="protein sequence ID" value="AAI01810.1"/>
    <property type="molecule type" value="mRNA"/>
</dbReference>
<dbReference type="EMBL" id="BC101811">
    <property type="protein sequence ID" value="AAI01812.1"/>
    <property type="molecule type" value="mRNA"/>
</dbReference>
<dbReference type="CCDS" id="CCDS13419.1"/>
<dbReference type="PIR" id="JC2231">
    <property type="entry name" value="JC2231"/>
</dbReference>
<dbReference type="RefSeq" id="NP_000952.1">
    <property type="nucleotide sequence ID" value="NM_000961.4"/>
</dbReference>
<dbReference type="PDB" id="2IAG">
    <property type="method" value="X-ray"/>
    <property type="resolution" value="2.15 A"/>
    <property type="chains" value="A/B=23-500"/>
</dbReference>
<dbReference type="PDB" id="3B6H">
    <property type="method" value="X-ray"/>
    <property type="resolution" value="1.62 A"/>
    <property type="chains" value="A/B=18-500"/>
</dbReference>
<dbReference type="PDBsum" id="2IAG"/>
<dbReference type="PDBsum" id="3B6H"/>
<dbReference type="SMR" id="Q16647"/>
<dbReference type="BioGRID" id="111712">
    <property type="interactions" value="6"/>
</dbReference>
<dbReference type="FunCoup" id="Q16647">
    <property type="interactions" value="143"/>
</dbReference>
<dbReference type="IntAct" id="Q16647">
    <property type="interactions" value="1"/>
</dbReference>
<dbReference type="STRING" id="9606.ENSP00000244043"/>
<dbReference type="BindingDB" id="Q16647"/>
<dbReference type="ChEMBL" id="CHEMBL4428"/>
<dbReference type="DrugBank" id="DB08675">
    <property type="generic name" value="(5Z)-7-{(1R,4S,5R,6R)-6-[(1E)-1-Octen-1-yl]-2,3-diazabicyclo[2.2.1]hept-2-en-5-yl}-5-heptenoic acid"/>
</dbReference>
<dbReference type="DrugBank" id="DB01240">
    <property type="generic name" value="Epoprostenol"/>
</dbReference>
<dbReference type="DrugBank" id="DB00812">
    <property type="generic name" value="Phenylbutazone"/>
</dbReference>
<dbReference type="DrugCentral" id="Q16647"/>
<dbReference type="GuidetoPHARMACOLOGY" id="1356"/>
<dbReference type="SwissLipids" id="SLP:000001097"/>
<dbReference type="CarbonylDB" id="Q16647"/>
<dbReference type="iPTMnet" id="Q16647"/>
<dbReference type="PhosphoSitePlus" id="Q16647"/>
<dbReference type="BioMuta" id="PTGIS"/>
<dbReference type="DMDM" id="2493373"/>
<dbReference type="jPOST" id="Q16647"/>
<dbReference type="MassIVE" id="Q16647"/>
<dbReference type="PaxDb" id="9606-ENSP00000244043"/>
<dbReference type="PeptideAtlas" id="Q16647"/>
<dbReference type="ProteomicsDB" id="60999"/>
<dbReference type="Pumba" id="Q16647"/>
<dbReference type="Antibodypedia" id="2399">
    <property type="antibodies" value="228 antibodies from 34 providers"/>
</dbReference>
<dbReference type="DNASU" id="5740"/>
<dbReference type="Ensembl" id="ENST00000244043.5">
    <property type="protein sequence ID" value="ENSP00000244043.3"/>
    <property type="gene ID" value="ENSG00000124212.6"/>
</dbReference>
<dbReference type="GeneID" id="5740"/>
<dbReference type="KEGG" id="hsa:5740"/>
<dbReference type="MANE-Select" id="ENST00000244043.5">
    <property type="protein sequence ID" value="ENSP00000244043.3"/>
    <property type="RefSeq nucleotide sequence ID" value="NM_000961.4"/>
    <property type="RefSeq protein sequence ID" value="NP_000952.1"/>
</dbReference>
<dbReference type="UCSC" id="uc002xut.4">
    <property type="organism name" value="human"/>
</dbReference>
<dbReference type="AGR" id="HGNC:9603"/>
<dbReference type="CTD" id="5740"/>
<dbReference type="DisGeNET" id="5740"/>
<dbReference type="GeneCards" id="PTGIS"/>
<dbReference type="HGNC" id="HGNC:9603">
    <property type="gene designation" value="PTGIS"/>
</dbReference>
<dbReference type="HPA" id="ENSG00000124212">
    <property type="expression patterns" value="Tissue enhanced (fallopian tube, urinary bladder)"/>
</dbReference>
<dbReference type="MalaCards" id="PTGIS"/>
<dbReference type="MIM" id="145500">
    <property type="type" value="phenotype"/>
</dbReference>
<dbReference type="MIM" id="601699">
    <property type="type" value="gene"/>
</dbReference>
<dbReference type="neXtProt" id="NX_Q16647"/>
<dbReference type="OpenTargets" id="ENSG00000124212"/>
<dbReference type="PharmGKB" id="PA292"/>
<dbReference type="VEuPathDB" id="HostDB:ENSG00000124212"/>
<dbReference type="eggNOG" id="KOG0684">
    <property type="taxonomic scope" value="Eukaryota"/>
</dbReference>
<dbReference type="GeneTree" id="ENSGT00940000153709"/>
<dbReference type="HOGENOM" id="CLU_018012_1_3_1"/>
<dbReference type="InParanoid" id="Q16647"/>
<dbReference type="OMA" id="KFITRMK"/>
<dbReference type="OrthoDB" id="6692864at2759"/>
<dbReference type="PAN-GO" id="Q16647">
    <property type="GO annotations" value="2 GO annotations based on evolutionary models"/>
</dbReference>
<dbReference type="PhylomeDB" id="Q16647"/>
<dbReference type="TreeFam" id="TF105090"/>
<dbReference type="BioCyc" id="MetaCyc:HS04738-MONOMER"/>
<dbReference type="BRENDA" id="5.3.99.4">
    <property type="organism ID" value="2681"/>
</dbReference>
<dbReference type="PathwayCommons" id="Q16647"/>
<dbReference type="Reactome" id="R-HSA-197264">
    <property type="pathway name" value="Nicotinamide salvaging"/>
</dbReference>
<dbReference type="Reactome" id="R-HSA-211979">
    <property type="pathway name" value="Eicosanoids"/>
</dbReference>
<dbReference type="Reactome" id="R-HSA-2162123">
    <property type="pathway name" value="Synthesis of Prostaglandins (PG) and Thromboxanes (TX)"/>
</dbReference>
<dbReference type="SABIO-RK" id="Q16647"/>
<dbReference type="SignaLink" id="Q16647"/>
<dbReference type="BioGRID-ORCS" id="5740">
    <property type="hits" value="14 hits in 1164 CRISPR screens"/>
</dbReference>
<dbReference type="ChiTaRS" id="PTGIS">
    <property type="organism name" value="human"/>
</dbReference>
<dbReference type="EvolutionaryTrace" id="Q16647"/>
<dbReference type="GeneWiki" id="Prostacyclin_synthase"/>
<dbReference type="GenomeRNAi" id="5740"/>
<dbReference type="Pharos" id="Q16647">
    <property type="development level" value="Tchem"/>
</dbReference>
<dbReference type="PRO" id="PR:Q16647"/>
<dbReference type="Proteomes" id="UP000005640">
    <property type="component" value="Chromosome 20"/>
</dbReference>
<dbReference type="RNAct" id="Q16647">
    <property type="molecule type" value="protein"/>
</dbReference>
<dbReference type="Bgee" id="ENSG00000124212">
    <property type="expression patterns" value="Expressed in parietal pleura and 169 other cell types or tissues"/>
</dbReference>
<dbReference type="GO" id="GO:0005901">
    <property type="term" value="C:caveola"/>
    <property type="evidence" value="ECO:0000314"/>
    <property type="project" value="UniProtKB"/>
</dbReference>
<dbReference type="GO" id="GO:0005783">
    <property type="term" value="C:endoplasmic reticulum"/>
    <property type="evidence" value="ECO:0000314"/>
    <property type="project" value="UniProtKB"/>
</dbReference>
<dbReference type="GO" id="GO:0005789">
    <property type="term" value="C:endoplasmic reticulum membrane"/>
    <property type="evidence" value="ECO:0000250"/>
    <property type="project" value="UniProtKB"/>
</dbReference>
<dbReference type="GO" id="GO:0005634">
    <property type="term" value="C:nucleus"/>
    <property type="evidence" value="ECO:0000314"/>
    <property type="project" value="UniProtKB"/>
</dbReference>
<dbReference type="GO" id="GO:0020037">
    <property type="term" value="F:heme binding"/>
    <property type="evidence" value="ECO:0000314"/>
    <property type="project" value="UniProtKB"/>
</dbReference>
<dbReference type="GO" id="GO:0106256">
    <property type="term" value="F:hydroperoxy icosatetraenoate dehydratase activity"/>
    <property type="evidence" value="ECO:0007669"/>
    <property type="project" value="UniProtKB-EC"/>
</dbReference>
<dbReference type="GO" id="GO:0005506">
    <property type="term" value="F:iron ion binding"/>
    <property type="evidence" value="ECO:0007669"/>
    <property type="project" value="InterPro"/>
</dbReference>
<dbReference type="GO" id="GO:0004497">
    <property type="term" value="F:monooxygenase activity"/>
    <property type="evidence" value="ECO:0007669"/>
    <property type="project" value="InterPro"/>
</dbReference>
<dbReference type="GO" id="GO:0016705">
    <property type="term" value="F:oxidoreductase activity, acting on paired donors, with incorporation or reduction of molecular oxygen"/>
    <property type="evidence" value="ECO:0007669"/>
    <property type="project" value="InterPro"/>
</dbReference>
<dbReference type="GO" id="GO:0008116">
    <property type="term" value="F:prostaglandin-I synthase activity"/>
    <property type="evidence" value="ECO:0000314"/>
    <property type="project" value="UniProtKB"/>
</dbReference>
<dbReference type="GO" id="GO:0097190">
    <property type="term" value="P:apoptotic signaling pathway"/>
    <property type="evidence" value="ECO:0000314"/>
    <property type="project" value="UniProtKB"/>
</dbReference>
<dbReference type="GO" id="GO:0071456">
    <property type="term" value="P:cellular response to hypoxia"/>
    <property type="evidence" value="ECO:0000314"/>
    <property type="project" value="UniProtKB"/>
</dbReference>
<dbReference type="GO" id="GO:0071347">
    <property type="term" value="P:cellular response to interleukin-1"/>
    <property type="evidence" value="ECO:0000270"/>
    <property type="project" value="UniProtKB"/>
</dbReference>
<dbReference type="GO" id="GO:0071354">
    <property type="term" value="P:cellular response to interleukin-6"/>
    <property type="evidence" value="ECO:0000270"/>
    <property type="project" value="UniProtKB"/>
</dbReference>
<dbReference type="GO" id="GO:0046697">
    <property type="term" value="P:decidualization"/>
    <property type="evidence" value="ECO:0007669"/>
    <property type="project" value="Ensembl"/>
</dbReference>
<dbReference type="GO" id="GO:0007566">
    <property type="term" value="P:embryo implantation"/>
    <property type="evidence" value="ECO:0007669"/>
    <property type="project" value="Ensembl"/>
</dbReference>
<dbReference type="GO" id="GO:0006690">
    <property type="term" value="P:icosanoid metabolic process"/>
    <property type="evidence" value="ECO:0000314"/>
    <property type="project" value="UniProtKB"/>
</dbReference>
<dbReference type="GO" id="GO:0050728">
    <property type="term" value="P:negative regulation of inflammatory response"/>
    <property type="evidence" value="ECO:0000314"/>
    <property type="project" value="UniProtKB"/>
</dbReference>
<dbReference type="GO" id="GO:0045019">
    <property type="term" value="P:negative regulation of nitric oxide biosynthetic process"/>
    <property type="evidence" value="ECO:0000314"/>
    <property type="project" value="UniProtKB"/>
</dbReference>
<dbReference type="GO" id="GO:0045766">
    <property type="term" value="P:positive regulation of angiogenesis"/>
    <property type="evidence" value="ECO:0000315"/>
    <property type="project" value="UniProtKB"/>
</dbReference>
<dbReference type="GO" id="GO:1900119">
    <property type="term" value="P:positive regulation of execution phase of apoptosis"/>
    <property type="evidence" value="ECO:0000314"/>
    <property type="project" value="UniProtKB"/>
</dbReference>
<dbReference type="GO" id="GO:0035360">
    <property type="term" value="P:positive regulation of peroxisome proliferator activated receptor signaling pathway"/>
    <property type="evidence" value="ECO:0000314"/>
    <property type="project" value="UniProtKB"/>
</dbReference>
<dbReference type="GO" id="GO:0001516">
    <property type="term" value="P:prostaglandin biosynthetic process"/>
    <property type="evidence" value="ECO:0000314"/>
    <property type="project" value="UniProtKB"/>
</dbReference>
<dbReference type="GO" id="GO:0046457">
    <property type="term" value="P:prostanoid biosynthetic process"/>
    <property type="evidence" value="ECO:0000304"/>
    <property type="project" value="Reactome"/>
</dbReference>
<dbReference type="CDD" id="cd20634">
    <property type="entry name" value="PGIS_CYP8A1"/>
    <property type="match status" value="1"/>
</dbReference>
<dbReference type="DisProt" id="DP02578"/>
<dbReference type="FunFam" id="1.10.630.10:FF:000025">
    <property type="entry name" value="Prostaglandin I2 (prostacyclin) synthase"/>
    <property type="match status" value="1"/>
</dbReference>
<dbReference type="Gene3D" id="1.10.630.10">
    <property type="entry name" value="Cytochrome P450"/>
    <property type="match status" value="1"/>
</dbReference>
<dbReference type="InterPro" id="IPR001128">
    <property type="entry name" value="Cyt_P450"/>
</dbReference>
<dbReference type="InterPro" id="IPR024204">
    <property type="entry name" value="Cyt_P450_CYP7A1-type"/>
</dbReference>
<dbReference type="InterPro" id="IPR002403">
    <property type="entry name" value="Cyt_P450_E_grp-IV"/>
</dbReference>
<dbReference type="InterPro" id="IPR036396">
    <property type="entry name" value="Cyt_P450_sf"/>
</dbReference>
<dbReference type="InterPro" id="IPR027286">
    <property type="entry name" value="PTGIS"/>
</dbReference>
<dbReference type="PANTHER" id="PTHR24306">
    <property type="match status" value="1"/>
</dbReference>
<dbReference type="PANTHER" id="PTHR24306:SF4">
    <property type="entry name" value="PROSTACYCLIN SYNTHASE"/>
    <property type="match status" value="1"/>
</dbReference>
<dbReference type="Pfam" id="PF00067">
    <property type="entry name" value="p450"/>
    <property type="match status" value="1"/>
</dbReference>
<dbReference type="PIRSF" id="PIRSF000047">
    <property type="entry name" value="Cytochrome_CYPVIIA1"/>
    <property type="match status" value="1"/>
</dbReference>
<dbReference type="PIRSF" id="PIRSF500628">
    <property type="entry name" value="PTGIS"/>
    <property type="match status" value="1"/>
</dbReference>
<dbReference type="PRINTS" id="PR00465">
    <property type="entry name" value="EP450IV"/>
</dbReference>
<dbReference type="SUPFAM" id="SSF48264">
    <property type="entry name" value="Cytochrome P450"/>
    <property type="match status" value="1"/>
</dbReference>